<keyword id="KW-0687">Ribonucleoprotein</keyword>
<keyword id="KW-0689">Ribosomal protein</keyword>
<name>RL35_PEDPA</name>
<accession>Q03GB1</accession>
<proteinExistence type="inferred from homology"/>
<protein>
    <recommendedName>
        <fullName evidence="1">Large ribosomal subunit protein bL35</fullName>
    </recommendedName>
    <alternativeName>
        <fullName evidence="3">50S ribosomal protein L35</fullName>
    </alternativeName>
</protein>
<organism>
    <name type="scientific">Pediococcus pentosaceus (strain ATCC 25745 / CCUG 21536 / LMG 10740 / 183-1w)</name>
    <dbReference type="NCBI Taxonomy" id="278197"/>
    <lineage>
        <taxon>Bacteria</taxon>
        <taxon>Bacillati</taxon>
        <taxon>Bacillota</taxon>
        <taxon>Bacilli</taxon>
        <taxon>Lactobacillales</taxon>
        <taxon>Lactobacillaceae</taxon>
        <taxon>Pediococcus</taxon>
    </lineage>
</organism>
<sequence>MPKMKTNRAAAKRFKKTANGGLKSANAYTSHRFHGKTKKQRRQLRGTDMMDSTNVKRYKKLLSNI</sequence>
<reference key="1">
    <citation type="journal article" date="2006" name="Proc. Natl. Acad. Sci. U.S.A.">
        <title>Comparative genomics of the lactic acid bacteria.</title>
        <authorList>
            <person name="Makarova K.S."/>
            <person name="Slesarev A."/>
            <person name="Wolf Y.I."/>
            <person name="Sorokin A."/>
            <person name="Mirkin B."/>
            <person name="Koonin E.V."/>
            <person name="Pavlov A."/>
            <person name="Pavlova N."/>
            <person name="Karamychev V."/>
            <person name="Polouchine N."/>
            <person name="Shakhova V."/>
            <person name="Grigoriev I."/>
            <person name="Lou Y."/>
            <person name="Rohksar D."/>
            <person name="Lucas S."/>
            <person name="Huang K."/>
            <person name="Goodstein D.M."/>
            <person name="Hawkins T."/>
            <person name="Plengvidhya V."/>
            <person name="Welker D."/>
            <person name="Hughes J."/>
            <person name="Goh Y."/>
            <person name="Benson A."/>
            <person name="Baldwin K."/>
            <person name="Lee J.-H."/>
            <person name="Diaz-Muniz I."/>
            <person name="Dosti B."/>
            <person name="Smeianov V."/>
            <person name="Wechter W."/>
            <person name="Barabote R."/>
            <person name="Lorca G."/>
            <person name="Altermann E."/>
            <person name="Barrangou R."/>
            <person name="Ganesan B."/>
            <person name="Xie Y."/>
            <person name="Rawsthorne H."/>
            <person name="Tamir D."/>
            <person name="Parker C."/>
            <person name="Breidt F."/>
            <person name="Broadbent J.R."/>
            <person name="Hutkins R."/>
            <person name="O'Sullivan D."/>
            <person name="Steele J."/>
            <person name="Unlu G."/>
            <person name="Saier M.H. Jr."/>
            <person name="Klaenhammer T."/>
            <person name="Richardson P."/>
            <person name="Kozyavkin S."/>
            <person name="Weimer B.C."/>
            <person name="Mills D.A."/>
        </authorList>
    </citation>
    <scope>NUCLEOTIDE SEQUENCE [LARGE SCALE GENOMIC DNA]</scope>
    <source>
        <strain>ATCC 25745 / CCUG 21536 / LMG 10740 / 183-1w</strain>
    </source>
</reference>
<comment type="similarity">
    <text evidence="1">Belongs to the bacterial ribosomal protein bL35 family.</text>
</comment>
<gene>
    <name evidence="1" type="primary">rpmI</name>
    <name type="ordered locus">PEPE_0700</name>
</gene>
<dbReference type="EMBL" id="CP000422">
    <property type="protein sequence ID" value="ABJ67761.1"/>
    <property type="molecule type" value="Genomic_DNA"/>
</dbReference>
<dbReference type="RefSeq" id="WP_002833800.1">
    <property type="nucleotide sequence ID" value="NC_008525.1"/>
</dbReference>
<dbReference type="SMR" id="Q03GB1"/>
<dbReference type="STRING" id="278197.PEPE_0700"/>
<dbReference type="GeneID" id="33061383"/>
<dbReference type="KEGG" id="ppe:PEPE_0700"/>
<dbReference type="eggNOG" id="COG0291">
    <property type="taxonomic scope" value="Bacteria"/>
</dbReference>
<dbReference type="HOGENOM" id="CLU_169643_3_1_9"/>
<dbReference type="OrthoDB" id="47476at2"/>
<dbReference type="Proteomes" id="UP000000773">
    <property type="component" value="Chromosome"/>
</dbReference>
<dbReference type="GO" id="GO:0022625">
    <property type="term" value="C:cytosolic large ribosomal subunit"/>
    <property type="evidence" value="ECO:0007669"/>
    <property type="project" value="TreeGrafter"/>
</dbReference>
<dbReference type="GO" id="GO:0003735">
    <property type="term" value="F:structural constituent of ribosome"/>
    <property type="evidence" value="ECO:0007669"/>
    <property type="project" value="InterPro"/>
</dbReference>
<dbReference type="GO" id="GO:0006412">
    <property type="term" value="P:translation"/>
    <property type="evidence" value="ECO:0007669"/>
    <property type="project" value="UniProtKB-UniRule"/>
</dbReference>
<dbReference type="FunFam" id="4.10.410.60:FF:000001">
    <property type="entry name" value="50S ribosomal protein L35"/>
    <property type="match status" value="1"/>
</dbReference>
<dbReference type="Gene3D" id="4.10.410.60">
    <property type="match status" value="1"/>
</dbReference>
<dbReference type="HAMAP" id="MF_00514">
    <property type="entry name" value="Ribosomal_bL35"/>
    <property type="match status" value="1"/>
</dbReference>
<dbReference type="InterPro" id="IPR001706">
    <property type="entry name" value="Ribosomal_bL35"/>
</dbReference>
<dbReference type="InterPro" id="IPR021137">
    <property type="entry name" value="Ribosomal_bL35-like"/>
</dbReference>
<dbReference type="InterPro" id="IPR018265">
    <property type="entry name" value="Ribosomal_bL35_CS"/>
</dbReference>
<dbReference type="InterPro" id="IPR037229">
    <property type="entry name" value="Ribosomal_bL35_sf"/>
</dbReference>
<dbReference type="NCBIfam" id="TIGR00001">
    <property type="entry name" value="rpmI_bact"/>
    <property type="match status" value="1"/>
</dbReference>
<dbReference type="PANTHER" id="PTHR33343">
    <property type="entry name" value="54S RIBOSOMAL PROTEIN BL35M"/>
    <property type="match status" value="1"/>
</dbReference>
<dbReference type="PANTHER" id="PTHR33343:SF1">
    <property type="entry name" value="LARGE RIBOSOMAL SUBUNIT PROTEIN BL35M"/>
    <property type="match status" value="1"/>
</dbReference>
<dbReference type="Pfam" id="PF01632">
    <property type="entry name" value="Ribosomal_L35p"/>
    <property type="match status" value="1"/>
</dbReference>
<dbReference type="PRINTS" id="PR00064">
    <property type="entry name" value="RIBOSOMALL35"/>
</dbReference>
<dbReference type="SUPFAM" id="SSF143034">
    <property type="entry name" value="L35p-like"/>
    <property type="match status" value="1"/>
</dbReference>
<dbReference type="PROSITE" id="PS00936">
    <property type="entry name" value="RIBOSOMAL_L35"/>
    <property type="match status" value="1"/>
</dbReference>
<feature type="chain" id="PRO_1000050735" description="Large ribosomal subunit protein bL35">
    <location>
        <begin position="1"/>
        <end position="65"/>
    </location>
</feature>
<feature type="region of interest" description="Disordered" evidence="2">
    <location>
        <begin position="1"/>
        <end position="51"/>
    </location>
</feature>
<feature type="compositionally biased region" description="Basic residues" evidence="2">
    <location>
        <begin position="31"/>
        <end position="44"/>
    </location>
</feature>
<evidence type="ECO:0000255" key="1">
    <source>
        <dbReference type="HAMAP-Rule" id="MF_00514"/>
    </source>
</evidence>
<evidence type="ECO:0000256" key="2">
    <source>
        <dbReference type="SAM" id="MobiDB-lite"/>
    </source>
</evidence>
<evidence type="ECO:0000305" key="3"/>